<comment type="function">
    <text evidence="1">Involved in the biosynthesis of the osmoprotectant glycine betaine. Catalyzes the irreversible oxidation of betaine aldehyde to the corresponding acid.</text>
</comment>
<comment type="catalytic activity">
    <reaction evidence="1">
        <text>betaine aldehyde + NAD(+) + H2O = glycine betaine + NADH + 2 H(+)</text>
        <dbReference type="Rhea" id="RHEA:15305"/>
        <dbReference type="ChEBI" id="CHEBI:15377"/>
        <dbReference type="ChEBI" id="CHEBI:15378"/>
        <dbReference type="ChEBI" id="CHEBI:15710"/>
        <dbReference type="ChEBI" id="CHEBI:17750"/>
        <dbReference type="ChEBI" id="CHEBI:57540"/>
        <dbReference type="ChEBI" id="CHEBI:57945"/>
        <dbReference type="EC" id="1.2.1.8"/>
    </reaction>
    <physiologicalReaction direction="left-to-right" evidence="1">
        <dbReference type="Rhea" id="RHEA:15306"/>
    </physiologicalReaction>
</comment>
<comment type="cofactor">
    <cofactor evidence="1">
        <name>K(+)</name>
        <dbReference type="ChEBI" id="CHEBI:29103"/>
    </cofactor>
    <text evidence="1">Binds 2 potassium ions per subunit.</text>
</comment>
<comment type="pathway">
    <text evidence="1">Amine and polyamine biosynthesis; betaine biosynthesis via choline pathway; betaine from betaine aldehyde: step 1/1.</text>
</comment>
<comment type="subunit">
    <text evidence="1">Dimer of dimers.</text>
</comment>
<comment type="similarity">
    <text evidence="1">Belongs to the aldehyde dehydrogenase family.</text>
</comment>
<evidence type="ECO:0000255" key="1">
    <source>
        <dbReference type="HAMAP-Rule" id="MF_00804"/>
    </source>
</evidence>
<name>BETB_RHIJ3</name>
<protein>
    <recommendedName>
        <fullName evidence="1">Betaine aldehyde dehydrogenase</fullName>
        <shortName evidence="1">BADH</shortName>
        <ecNumber evidence="1">1.2.1.8</ecNumber>
    </recommendedName>
</protein>
<feature type="chain" id="PRO_1000047053" description="Betaine aldehyde dehydrogenase">
    <location>
        <begin position="1"/>
        <end position="487"/>
    </location>
</feature>
<feature type="active site" description="Charge relay system" evidence="1">
    <location>
        <position position="162"/>
    </location>
</feature>
<feature type="active site" description="Proton acceptor" evidence="1">
    <location>
        <position position="250"/>
    </location>
</feature>
<feature type="active site" description="Nucleophile" evidence="1">
    <location>
        <position position="284"/>
    </location>
</feature>
<feature type="active site" description="Charge relay system" evidence="1">
    <location>
        <position position="461"/>
    </location>
</feature>
<feature type="binding site" evidence="1">
    <location>
        <position position="26"/>
    </location>
    <ligand>
        <name>K(+)</name>
        <dbReference type="ChEBI" id="CHEBI:29103"/>
        <label>1</label>
    </ligand>
</feature>
<feature type="binding site" evidence="1">
    <location>
        <position position="93"/>
    </location>
    <ligand>
        <name>K(+)</name>
        <dbReference type="ChEBI" id="CHEBI:29103"/>
        <label>1</label>
    </ligand>
</feature>
<feature type="binding site" evidence="1">
    <location>
        <begin position="150"/>
        <end position="152"/>
    </location>
    <ligand>
        <name>NAD(+)</name>
        <dbReference type="ChEBI" id="CHEBI:57540"/>
    </ligand>
</feature>
<feature type="binding site" evidence="1">
    <location>
        <begin position="176"/>
        <end position="179"/>
    </location>
    <ligand>
        <name>NAD(+)</name>
        <dbReference type="ChEBI" id="CHEBI:57540"/>
    </ligand>
</feature>
<feature type="binding site" evidence="1">
    <location>
        <begin position="229"/>
        <end position="232"/>
    </location>
    <ligand>
        <name>NAD(+)</name>
        <dbReference type="ChEBI" id="CHEBI:57540"/>
    </ligand>
</feature>
<feature type="binding site" evidence="1">
    <location>
        <position position="244"/>
    </location>
    <ligand>
        <name>K(+)</name>
        <dbReference type="ChEBI" id="CHEBI:29103"/>
        <label>2</label>
    </ligand>
</feature>
<feature type="binding site" evidence="1">
    <location>
        <position position="252"/>
    </location>
    <ligand>
        <name>NAD(+)</name>
        <dbReference type="ChEBI" id="CHEBI:57540"/>
    </ligand>
</feature>
<feature type="binding site" description="covalent" evidence="1">
    <location>
        <position position="284"/>
    </location>
    <ligand>
        <name>NAD(+)</name>
        <dbReference type="ChEBI" id="CHEBI:57540"/>
    </ligand>
</feature>
<feature type="binding site" evidence="1">
    <location>
        <position position="384"/>
    </location>
    <ligand>
        <name>NAD(+)</name>
        <dbReference type="ChEBI" id="CHEBI:57540"/>
    </ligand>
</feature>
<feature type="binding site" evidence="1">
    <location>
        <position position="454"/>
    </location>
    <ligand>
        <name>K(+)</name>
        <dbReference type="ChEBI" id="CHEBI:29103"/>
        <label>2</label>
    </ligand>
</feature>
<feature type="binding site" evidence="1">
    <location>
        <position position="457"/>
    </location>
    <ligand>
        <name>K(+)</name>
        <dbReference type="ChEBI" id="CHEBI:29103"/>
        <label>2</label>
    </ligand>
</feature>
<feature type="modified residue" description="Cysteine sulfenic acid (-SOH)" evidence="1">
    <location>
        <position position="284"/>
    </location>
</feature>
<organism>
    <name type="scientific">Rhizobium johnstonii (strain DSM 114642 / LMG 32736 / 3841)</name>
    <name type="common">Rhizobium leguminosarum bv. viciae</name>
    <dbReference type="NCBI Taxonomy" id="216596"/>
    <lineage>
        <taxon>Bacteria</taxon>
        <taxon>Pseudomonadati</taxon>
        <taxon>Pseudomonadota</taxon>
        <taxon>Alphaproteobacteria</taxon>
        <taxon>Hyphomicrobiales</taxon>
        <taxon>Rhizobiaceae</taxon>
        <taxon>Rhizobium/Agrobacterium group</taxon>
        <taxon>Rhizobium</taxon>
        <taxon>Rhizobium johnstonii</taxon>
    </lineage>
</organism>
<reference key="1">
    <citation type="journal article" date="2006" name="Genome Biol.">
        <title>The genome of Rhizobium leguminosarum has recognizable core and accessory components.</title>
        <authorList>
            <person name="Young J.P.W."/>
            <person name="Crossman L.C."/>
            <person name="Johnston A.W.B."/>
            <person name="Thomson N.R."/>
            <person name="Ghazoui Z.F."/>
            <person name="Hull K.H."/>
            <person name="Wexler M."/>
            <person name="Curson A.R.J."/>
            <person name="Todd J.D."/>
            <person name="Poole P.S."/>
            <person name="Mauchline T.H."/>
            <person name="East A.K."/>
            <person name="Quail M.A."/>
            <person name="Churcher C."/>
            <person name="Arrowsmith C."/>
            <person name="Cherevach I."/>
            <person name="Chillingworth T."/>
            <person name="Clarke K."/>
            <person name="Cronin A."/>
            <person name="Davis P."/>
            <person name="Fraser A."/>
            <person name="Hance Z."/>
            <person name="Hauser H."/>
            <person name="Jagels K."/>
            <person name="Moule S."/>
            <person name="Mungall K."/>
            <person name="Norbertczak H."/>
            <person name="Rabbinowitsch E."/>
            <person name="Sanders M."/>
            <person name="Simmonds M."/>
            <person name="Whitehead S."/>
            <person name="Parkhill J."/>
        </authorList>
    </citation>
    <scope>NUCLEOTIDE SEQUENCE [LARGE SCALE GENOMIC DNA]</scope>
    <source>
        <strain>DSM 114642 / LMG 32736 / 3841</strain>
    </source>
</reference>
<sequence length="487" mass="51895">MKAQPKASHFIDGEYVEDTDGTVIESLYPATGEVIARLHAATPAIVERAIAAAKRAQPEWAAMSPMARGRILKRAADIMRERNRVLSELETLDTGKPIQETVVADPTSGADAFEFFGGIAPAGLNGSHIPLGQDFAYTKRVPLGVCVGIGAWNYPQQIACWKAAPALVCGNAMVFKPSENTPLGALKIAEILHEAGLPKGLFNVIQGDRDTGPLLVNHPDVAKVSLTGSVPTGRRVAAAAAGNLKHVTMELGGKSPLVVFDDADLDSAVGGAMLGNFYSTGQVCSNGTRVFVQKTIKDEFLKRLKVRTEAMLIGDPMDEATQVGPMVSWAQREKVISYIEKGKAEGATLIAGGGIPNNVSGEGYYVQPTVFADVTDDMTIAREEIFGPVMCVLDFDAEDEVIARANASEFGLSGGVFTADLTRAHRVVDRLEAGTLWINTYNLCPVEIPFGGSKQSGFGRENSLAALEHYSELKTVYVGMGPVVAPY</sequence>
<gene>
    <name evidence="1" type="primary">betB</name>
    <name type="ordered locus">RL1271</name>
</gene>
<keyword id="KW-0479">Metal-binding</keyword>
<keyword id="KW-0520">NAD</keyword>
<keyword id="KW-0521">NADP</keyword>
<keyword id="KW-0558">Oxidation</keyword>
<keyword id="KW-0560">Oxidoreductase</keyword>
<keyword id="KW-0630">Potassium</keyword>
<proteinExistence type="inferred from homology"/>
<accession>Q1MJU3</accession>
<dbReference type="EC" id="1.2.1.8" evidence="1"/>
<dbReference type="EMBL" id="AM236080">
    <property type="protein sequence ID" value="CAK06767.1"/>
    <property type="molecule type" value="Genomic_DNA"/>
</dbReference>
<dbReference type="RefSeq" id="WP_011650992.1">
    <property type="nucleotide sequence ID" value="NC_008380.1"/>
</dbReference>
<dbReference type="SMR" id="Q1MJU3"/>
<dbReference type="EnsemblBacteria" id="CAK06767">
    <property type="protein sequence ID" value="CAK06767"/>
    <property type="gene ID" value="RL1271"/>
</dbReference>
<dbReference type="KEGG" id="rle:RL1271"/>
<dbReference type="eggNOG" id="COG1012">
    <property type="taxonomic scope" value="Bacteria"/>
</dbReference>
<dbReference type="HOGENOM" id="CLU_005391_0_0_5"/>
<dbReference type="UniPathway" id="UPA00529">
    <property type="reaction ID" value="UER00386"/>
</dbReference>
<dbReference type="Proteomes" id="UP000006575">
    <property type="component" value="Chromosome"/>
</dbReference>
<dbReference type="GO" id="GO:0008802">
    <property type="term" value="F:betaine-aldehyde dehydrogenase (NAD+) activity"/>
    <property type="evidence" value="ECO:0007669"/>
    <property type="project" value="UniProtKB-UniRule"/>
</dbReference>
<dbReference type="GO" id="GO:0046872">
    <property type="term" value="F:metal ion binding"/>
    <property type="evidence" value="ECO:0007669"/>
    <property type="project" value="UniProtKB-KW"/>
</dbReference>
<dbReference type="GO" id="GO:0019285">
    <property type="term" value="P:glycine betaine biosynthetic process from choline"/>
    <property type="evidence" value="ECO:0007669"/>
    <property type="project" value="UniProtKB-UniRule"/>
</dbReference>
<dbReference type="CDD" id="cd07090">
    <property type="entry name" value="ALDH_F9_TMBADH"/>
    <property type="match status" value="1"/>
</dbReference>
<dbReference type="FunFam" id="3.40.309.10:FF:000012">
    <property type="entry name" value="Betaine aldehyde dehydrogenase"/>
    <property type="match status" value="1"/>
</dbReference>
<dbReference type="FunFam" id="3.40.605.10:FF:000007">
    <property type="entry name" value="NAD/NADP-dependent betaine aldehyde dehydrogenase"/>
    <property type="match status" value="1"/>
</dbReference>
<dbReference type="Gene3D" id="3.40.605.10">
    <property type="entry name" value="Aldehyde Dehydrogenase, Chain A, domain 1"/>
    <property type="match status" value="1"/>
</dbReference>
<dbReference type="Gene3D" id="3.40.309.10">
    <property type="entry name" value="Aldehyde Dehydrogenase, Chain A, domain 2"/>
    <property type="match status" value="1"/>
</dbReference>
<dbReference type="HAMAP" id="MF_00804">
    <property type="entry name" value="BADH"/>
    <property type="match status" value="1"/>
</dbReference>
<dbReference type="InterPro" id="IPR016161">
    <property type="entry name" value="Ald_DH/histidinol_DH"/>
</dbReference>
<dbReference type="InterPro" id="IPR016163">
    <property type="entry name" value="Ald_DH_C"/>
</dbReference>
<dbReference type="InterPro" id="IPR016160">
    <property type="entry name" value="Ald_DH_CS_CYS"/>
</dbReference>
<dbReference type="InterPro" id="IPR029510">
    <property type="entry name" value="Ald_DH_CS_GLU"/>
</dbReference>
<dbReference type="InterPro" id="IPR016162">
    <property type="entry name" value="Ald_DH_N"/>
</dbReference>
<dbReference type="InterPro" id="IPR015590">
    <property type="entry name" value="Aldehyde_DH_dom"/>
</dbReference>
<dbReference type="InterPro" id="IPR011264">
    <property type="entry name" value="BADH"/>
</dbReference>
<dbReference type="NCBIfam" id="TIGR01804">
    <property type="entry name" value="BADH"/>
    <property type="match status" value="1"/>
</dbReference>
<dbReference type="NCBIfam" id="NF009725">
    <property type="entry name" value="PRK13252.1"/>
    <property type="match status" value="1"/>
</dbReference>
<dbReference type="PANTHER" id="PTHR11699">
    <property type="entry name" value="ALDEHYDE DEHYDROGENASE-RELATED"/>
    <property type="match status" value="1"/>
</dbReference>
<dbReference type="Pfam" id="PF00171">
    <property type="entry name" value="Aldedh"/>
    <property type="match status" value="1"/>
</dbReference>
<dbReference type="SUPFAM" id="SSF53720">
    <property type="entry name" value="ALDH-like"/>
    <property type="match status" value="1"/>
</dbReference>
<dbReference type="PROSITE" id="PS00070">
    <property type="entry name" value="ALDEHYDE_DEHYDR_CYS"/>
    <property type="match status" value="1"/>
</dbReference>
<dbReference type="PROSITE" id="PS00687">
    <property type="entry name" value="ALDEHYDE_DEHYDR_GLU"/>
    <property type="match status" value="1"/>
</dbReference>